<accession>Q11L77</accession>
<name>TDH_CHESB</name>
<evidence type="ECO:0000255" key="1">
    <source>
        <dbReference type="HAMAP-Rule" id="MF_00627"/>
    </source>
</evidence>
<proteinExistence type="inferred from homology"/>
<organism>
    <name type="scientific">Chelativorans sp. (strain BNC1)</name>
    <dbReference type="NCBI Taxonomy" id="266779"/>
    <lineage>
        <taxon>Bacteria</taxon>
        <taxon>Pseudomonadati</taxon>
        <taxon>Pseudomonadota</taxon>
        <taxon>Alphaproteobacteria</taxon>
        <taxon>Hyphomicrobiales</taxon>
        <taxon>Phyllobacteriaceae</taxon>
        <taxon>Chelativorans</taxon>
    </lineage>
</organism>
<protein>
    <recommendedName>
        <fullName evidence="1">L-threonine 3-dehydrogenase</fullName>
        <shortName evidence="1">TDH</shortName>
        <ecNumber evidence="1">1.1.1.103</ecNumber>
    </recommendedName>
</protein>
<feature type="chain" id="PRO_1000051644" description="L-threonine 3-dehydrogenase">
    <location>
        <begin position="1"/>
        <end position="344"/>
    </location>
</feature>
<feature type="active site" description="Charge relay system" evidence="1">
    <location>
        <position position="44"/>
    </location>
</feature>
<feature type="active site" description="Charge relay system" evidence="1">
    <location>
        <position position="47"/>
    </location>
</feature>
<feature type="binding site" evidence="1">
    <location>
        <position position="42"/>
    </location>
    <ligand>
        <name>Zn(2+)</name>
        <dbReference type="ChEBI" id="CHEBI:29105"/>
        <label>1</label>
        <note>catalytic</note>
    </ligand>
</feature>
<feature type="binding site" evidence="1">
    <location>
        <position position="67"/>
    </location>
    <ligand>
        <name>Zn(2+)</name>
        <dbReference type="ChEBI" id="CHEBI:29105"/>
        <label>1</label>
        <note>catalytic</note>
    </ligand>
</feature>
<feature type="binding site" evidence="1">
    <location>
        <position position="68"/>
    </location>
    <ligand>
        <name>Zn(2+)</name>
        <dbReference type="ChEBI" id="CHEBI:29105"/>
        <label>1</label>
        <note>catalytic</note>
    </ligand>
</feature>
<feature type="binding site" evidence="1">
    <location>
        <position position="97"/>
    </location>
    <ligand>
        <name>Zn(2+)</name>
        <dbReference type="ChEBI" id="CHEBI:29105"/>
        <label>2</label>
    </ligand>
</feature>
<feature type="binding site" evidence="1">
    <location>
        <position position="100"/>
    </location>
    <ligand>
        <name>Zn(2+)</name>
        <dbReference type="ChEBI" id="CHEBI:29105"/>
        <label>2</label>
    </ligand>
</feature>
<feature type="binding site" evidence="1">
    <location>
        <position position="103"/>
    </location>
    <ligand>
        <name>Zn(2+)</name>
        <dbReference type="ChEBI" id="CHEBI:29105"/>
        <label>2</label>
    </ligand>
</feature>
<feature type="binding site" evidence="1">
    <location>
        <position position="111"/>
    </location>
    <ligand>
        <name>Zn(2+)</name>
        <dbReference type="ChEBI" id="CHEBI:29105"/>
        <label>2</label>
    </ligand>
</feature>
<feature type="binding site" evidence="1">
    <location>
        <position position="179"/>
    </location>
    <ligand>
        <name>NAD(+)</name>
        <dbReference type="ChEBI" id="CHEBI:57540"/>
    </ligand>
</feature>
<feature type="binding site" evidence="1">
    <location>
        <position position="199"/>
    </location>
    <ligand>
        <name>NAD(+)</name>
        <dbReference type="ChEBI" id="CHEBI:57540"/>
    </ligand>
</feature>
<feature type="binding site" evidence="1">
    <location>
        <position position="204"/>
    </location>
    <ligand>
        <name>NAD(+)</name>
        <dbReference type="ChEBI" id="CHEBI:57540"/>
    </ligand>
</feature>
<feature type="binding site" evidence="1">
    <location>
        <begin position="266"/>
        <end position="268"/>
    </location>
    <ligand>
        <name>NAD(+)</name>
        <dbReference type="ChEBI" id="CHEBI:57540"/>
    </ligand>
</feature>
<feature type="binding site" evidence="1">
    <location>
        <begin position="290"/>
        <end position="291"/>
    </location>
    <ligand>
        <name>NAD(+)</name>
        <dbReference type="ChEBI" id="CHEBI:57540"/>
    </ligand>
</feature>
<feature type="site" description="Important for catalytic activity for the proton relay mechanism but does not participate directly in the coordination of zinc atom" evidence="1">
    <location>
        <position position="152"/>
    </location>
</feature>
<sequence length="344" mass="37428">MTNMMKALVKAKPEEGLWMERVPLPEIGPNDVLIKVRKAAICGTDVHIWNWDEWARKTVPVPLVTGHEFVGEVVDVGSAVTEYRIGQRVSGEGHIVCGHCRNCRAGRGHLCRNTLGVGVHRPGAFAEYISLPQHNVVAIPDDVPDEIAAIFDPLGNAVHTALSFDLVGEDVLVTGAGPIGIMGALVAQCVGARKVVITDINPGRLALAKKLGVRHVVNAREEKLTDVMRKLGMTEGFDVGLEMSGSASAFRDMIDVMNNGGKIAILGIAPTGFEIDWNKVIFKMLHLKGIYGREMFETWYKMIALVQGPLDISGLITHRISADDYREGFAAMRSGEAGKVVMDW</sequence>
<dbReference type="EC" id="1.1.1.103" evidence="1"/>
<dbReference type="EMBL" id="CP000390">
    <property type="protein sequence ID" value="ABG61848.1"/>
    <property type="molecule type" value="Genomic_DNA"/>
</dbReference>
<dbReference type="SMR" id="Q11L77"/>
<dbReference type="STRING" id="266779.Meso_0444"/>
<dbReference type="KEGG" id="mes:Meso_0444"/>
<dbReference type="eggNOG" id="COG1063">
    <property type="taxonomic scope" value="Bacteria"/>
</dbReference>
<dbReference type="HOGENOM" id="CLU_026673_11_0_5"/>
<dbReference type="OrthoDB" id="9773078at2"/>
<dbReference type="UniPathway" id="UPA00046">
    <property type="reaction ID" value="UER00505"/>
</dbReference>
<dbReference type="GO" id="GO:0005737">
    <property type="term" value="C:cytoplasm"/>
    <property type="evidence" value="ECO:0007669"/>
    <property type="project" value="UniProtKB-SubCell"/>
</dbReference>
<dbReference type="GO" id="GO:0008743">
    <property type="term" value="F:L-threonine 3-dehydrogenase activity"/>
    <property type="evidence" value="ECO:0007669"/>
    <property type="project" value="UniProtKB-UniRule"/>
</dbReference>
<dbReference type="GO" id="GO:0008270">
    <property type="term" value="F:zinc ion binding"/>
    <property type="evidence" value="ECO:0007669"/>
    <property type="project" value="UniProtKB-UniRule"/>
</dbReference>
<dbReference type="GO" id="GO:0019518">
    <property type="term" value="P:L-threonine catabolic process to glycine"/>
    <property type="evidence" value="ECO:0007669"/>
    <property type="project" value="UniProtKB-UniPathway"/>
</dbReference>
<dbReference type="Gene3D" id="3.90.180.10">
    <property type="entry name" value="Medium-chain alcohol dehydrogenases, catalytic domain"/>
    <property type="match status" value="1"/>
</dbReference>
<dbReference type="Gene3D" id="3.40.50.720">
    <property type="entry name" value="NAD(P)-binding Rossmann-like Domain"/>
    <property type="match status" value="1"/>
</dbReference>
<dbReference type="HAMAP" id="MF_00627">
    <property type="entry name" value="Thr_dehydrog"/>
    <property type="match status" value="1"/>
</dbReference>
<dbReference type="InterPro" id="IPR013149">
    <property type="entry name" value="ADH-like_C"/>
</dbReference>
<dbReference type="InterPro" id="IPR013154">
    <property type="entry name" value="ADH-like_N"/>
</dbReference>
<dbReference type="InterPro" id="IPR002328">
    <property type="entry name" value="ADH_Zn_CS"/>
</dbReference>
<dbReference type="InterPro" id="IPR011032">
    <property type="entry name" value="GroES-like_sf"/>
</dbReference>
<dbReference type="InterPro" id="IPR004627">
    <property type="entry name" value="L-Threonine_3-DHase"/>
</dbReference>
<dbReference type="InterPro" id="IPR036291">
    <property type="entry name" value="NAD(P)-bd_dom_sf"/>
</dbReference>
<dbReference type="InterPro" id="IPR020843">
    <property type="entry name" value="PKS_ER"/>
</dbReference>
<dbReference type="InterPro" id="IPR050129">
    <property type="entry name" value="Zn_alcohol_dh"/>
</dbReference>
<dbReference type="NCBIfam" id="NF003808">
    <property type="entry name" value="PRK05396.1"/>
    <property type="match status" value="1"/>
</dbReference>
<dbReference type="NCBIfam" id="TIGR00692">
    <property type="entry name" value="tdh"/>
    <property type="match status" value="1"/>
</dbReference>
<dbReference type="PANTHER" id="PTHR43401">
    <property type="entry name" value="L-THREONINE 3-DEHYDROGENASE"/>
    <property type="match status" value="1"/>
</dbReference>
<dbReference type="PANTHER" id="PTHR43401:SF2">
    <property type="entry name" value="L-THREONINE 3-DEHYDROGENASE"/>
    <property type="match status" value="1"/>
</dbReference>
<dbReference type="Pfam" id="PF08240">
    <property type="entry name" value="ADH_N"/>
    <property type="match status" value="1"/>
</dbReference>
<dbReference type="Pfam" id="PF00107">
    <property type="entry name" value="ADH_zinc_N"/>
    <property type="match status" value="1"/>
</dbReference>
<dbReference type="SMART" id="SM00829">
    <property type="entry name" value="PKS_ER"/>
    <property type="match status" value="1"/>
</dbReference>
<dbReference type="SUPFAM" id="SSF50129">
    <property type="entry name" value="GroES-like"/>
    <property type="match status" value="1"/>
</dbReference>
<dbReference type="SUPFAM" id="SSF51735">
    <property type="entry name" value="NAD(P)-binding Rossmann-fold domains"/>
    <property type="match status" value="1"/>
</dbReference>
<dbReference type="PROSITE" id="PS00059">
    <property type="entry name" value="ADH_ZINC"/>
    <property type="match status" value="1"/>
</dbReference>
<reference key="1">
    <citation type="submission" date="2006-06" db="EMBL/GenBank/DDBJ databases">
        <title>Complete sequence of chromosome of Mesorhizobium sp. BNC1.</title>
        <authorList>
            <consortium name="US DOE Joint Genome Institute"/>
            <person name="Copeland A."/>
            <person name="Lucas S."/>
            <person name="Lapidus A."/>
            <person name="Barry K."/>
            <person name="Detter J.C."/>
            <person name="Glavina del Rio T."/>
            <person name="Hammon N."/>
            <person name="Israni S."/>
            <person name="Dalin E."/>
            <person name="Tice H."/>
            <person name="Pitluck S."/>
            <person name="Chertkov O."/>
            <person name="Brettin T."/>
            <person name="Bruce D."/>
            <person name="Han C."/>
            <person name="Tapia R."/>
            <person name="Gilna P."/>
            <person name="Schmutz J."/>
            <person name="Larimer F."/>
            <person name="Land M."/>
            <person name="Hauser L."/>
            <person name="Kyrpides N."/>
            <person name="Mikhailova N."/>
            <person name="Richardson P."/>
        </authorList>
    </citation>
    <scope>NUCLEOTIDE SEQUENCE [LARGE SCALE GENOMIC DNA]</scope>
    <source>
        <strain>BNC1</strain>
    </source>
</reference>
<comment type="function">
    <text evidence="1">Catalyzes the NAD(+)-dependent oxidation of L-threonine to 2-amino-3-ketobutyrate.</text>
</comment>
<comment type="catalytic activity">
    <reaction evidence="1">
        <text>L-threonine + NAD(+) = (2S)-2-amino-3-oxobutanoate + NADH + H(+)</text>
        <dbReference type="Rhea" id="RHEA:13161"/>
        <dbReference type="ChEBI" id="CHEBI:15378"/>
        <dbReference type="ChEBI" id="CHEBI:57540"/>
        <dbReference type="ChEBI" id="CHEBI:57926"/>
        <dbReference type="ChEBI" id="CHEBI:57945"/>
        <dbReference type="ChEBI" id="CHEBI:78948"/>
        <dbReference type="EC" id="1.1.1.103"/>
    </reaction>
</comment>
<comment type="cofactor">
    <cofactor evidence="1">
        <name>Zn(2+)</name>
        <dbReference type="ChEBI" id="CHEBI:29105"/>
    </cofactor>
    <text evidence="1">Binds 2 Zn(2+) ions per subunit.</text>
</comment>
<comment type="pathway">
    <text evidence="1">Amino-acid degradation; L-threonine degradation via oxydo-reductase pathway; glycine from L-threonine: step 1/2.</text>
</comment>
<comment type="subunit">
    <text evidence="1">Homotetramer.</text>
</comment>
<comment type="subcellular location">
    <subcellularLocation>
        <location evidence="1">Cytoplasm</location>
    </subcellularLocation>
</comment>
<comment type="similarity">
    <text evidence="1">Belongs to the zinc-containing alcohol dehydrogenase family.</text>
</comment>
<keyword id="KW-0963">Cytoplasm</keyword>
<keyword id="KW-0479">Metal-binding</keyword>
<keyword id="KW-0520">NAD</keyword>
<keyword id="KW-0560">Oxidoreductase</keyword>
<keyword id="KW-0862">Zinc</keyword>
<gene>
    <name evidence="1" type="primary">tdh</name>
    <name type="ordered locus">Meso_0444</name>
</gene>